<reference key="1">
    <citation type="submission" date="1999-07" db="EMBL/GenBank/DDBJ databases">
        <title>A GroEL-like protein from the psychrotrophic bacterium Pseudoalteromonas haloplanktis TAC125.</title>
        <authorList>
            <person name="Tosco A."/>
            <person name="Birolo L."/>
            <person name="Scaloni A."/>
            <person name="Sannia G."/>
            <person name="Marino G."/>
        </authorList>
    </citation>
    <scope>NUCLEOTIDE SEQUENCE [GENOMIC DNA]</scope>
</reference>
<reference key="2">
    <citation type="journal article" date="2005" name="Genome Res.">
        <title>Coping with cold: the genome of the versatile marine Antarctica bacterium Pseudoalteromonas haloplanktis TAC125.</title>
        <authorList>
            <person name="Medigue C."/>
            <person name="Krin E."/>
            <person name="Pascal G."/>
            <person name="Barbe V."/>
            <person name="Bernsel A."/>
            <person name="Bertin P.N."/>
            <person name="Cheung F."/>
            <person name="Cruveiller S."/>
            <person name="D'Amico S."/>
            <person name="Duilio A."/>
            <person name="Fang G."/>
            <person name="Feller G."/>
            <person name="Ho C."/>
            <person name="Mangenot S."/>
            <person name="Marino G."/>
            <person name="Nilsson J."/>
            <person name="Parrilli E."/>
            <person name="Rocha E.P.C."/>
            <person name="Rouy Z."/>
            <person name="Sekowska A."/>
            <person name="Tutino M.L."/>
            <person name="Vallenet D."/>
            <person name="von Heijne G."/>
            <person name="Danchin A."/>
        </authorList>
    </citation>
    <scope>NUCLEOTIDE SEQUENCE [LARGE SCALE GENOMIC DNA]</scope>
    <source>
        <strain>TAC 125</strain>
    </source>
</reference>
<keyword id="KW-0067">ATP-binding</keyword>
<keyword id="KW-0143">Chaperone</keyword>
<keyword id="KW-0963">Cytoplasm</keyword>
<keyword id="KW-0413">Isomerase</keyword>
<keyword id="KW-0547">Nucleotide-binding</keyword>
<keyword id="KW-1185">Reference proteome</keyword>
<name>CH60_PSET1</name>
<comment type="function">
    <text evidence="1">Together with its co-chaperonin GroES, plays an essential role in assisting protein folding. The GroEL-GroES system forms a nano-cage that allows encapsulation of the non-native substrate proteins and provides a physical environment optimized to promote and accelerate protein folding.</text>
</comment>
<comment type="catalytic activity">
    <reaction evidence="1">
        <text>ATP + H2O + a folded polypeptide = ADP + phosphate + an unfolded polypeptide.</text>
        <dbReference type="EC" id="5.6.1.7"/>
    </reaction>
</comment>
<comment type="subunit">
    <text evidence="1">Forms a cylinder of 14 subunits composed of two heptameric rings stacked back-to-back. Interacts with the co-chaperonin GroES.</text>
</comment>
<comment type="subcellular location">
    <subcellularLocation>
        <location evidence="1">Cytoplasm</location>
    </subcellularLocation>
</comment>
<comment type="similarity">
    <text evidence="1">Belongs to the chaperonin (HSP60) family.</text>
</comment>
<proteinExistence type="inferred from homology"/>
<evidence type="ECO:0000255" key="1">
    <source>
        <dbReference type="HAMAP-Rule" id="MF_00600"/>
    </source>
</evidence>
<evidence type="ECO:0000305" key="2"/>
<accession>Q9XAU7</accession>
<accession>Q3IDS8</accession>
<feature type="chain" id="PRO_0000063257" description="Chaperonin GroEL">
    <location>
        <begin position="1"/>
        <end position="547"/>
    </location>
</feature>
<feature type="binding site" evidence="1">
    <location>
        <begin position="30"/>
        <end position="33"/>
    </location>
    <ligand>
        <name>ATP</name>
        <dbReference type="ChEBI" id="CHEBI:30616"/>
    </ligand>
</feature>
<feature type="binding site" evidence="1">
    <location>
        <position position="51"/>
    </location>
    <ligand>
        <name>ATP</name>
        <dbReference type="ChEBI" id="CHEBI:30616"/>
    </ligand>
</feature>
<feature type="binding site" evidence="1">
    <location>
        <begin position="87"/>
        <end position="91"/>
    </location>
    <ligand>
        <name>ATP</name>
        <dbReference type="ChEBI" id="CHEBI:30616"/>
    </ligand>
</feature>
<feature type="binding site" evidence="1">
    <location>
        <position position="416"/>
    </location>
    <ligand>
        <name>ATP</name>
        <dbReference type="ChEBI" id="CHEBI:30616"/>
    </ligand>
</feature>
<feature type="binding site" evidence="1">
    <location>
        <begin position="480"/>
        <end position="482"/>
    </location>
    <ligand>
        <name>ATP</name>
        <dbReference type="ChEBI" id="CHEBI:30616"/>
    </ligand>
</feature>
<feature type="binding site" evidence="1">
    <location>
        <position position="496"/>
    </location>
    <ligand>
        <name>ATP</name>
        <dbReference type="ChEBI" id="CHEBI:30616"/>
    </ligand>
</feature>
<feature type="sequence conflict" description="In Ref. 1; CAB50775." evidence="2" ref="1">
    <original>K</original>
    <variation>E</variation>
    <location>
        <position position="322"/>
    </location>
</feature>
<gene>
    <name evidence="1" type="primary">groEL</name>
    <name evidence="1" type="synonym">groL</name>
    <name type="ordered locus">PSHAa0259</name>
</gene>
<protein>
    <recommendedName>
        <fullName evidence="1">Chaperonin GroEL</fullName>
        <ecNumber evidence="1">5.6.1.7</ecNumber>
    </recommendedName>
    <alternativeName>
        <fullName evidence="1">60 kDa chaperonin</fullName>
    </alternativeName>
    <alternativeName>
        <fullName evidence="1">Chaperonin-60</fullName>
        <shortName evidence="1">Cpn60</shortName>
    </alternativeName>
</protein>
<organism>
    <name type="scientific">Pseudoalteromonas translucida (strain TAC 125)</name>
    <dbReference type="NCBI Taxonomy" id="326442"/>
    <lineage>
        <taxon>Bacteria</taxon>
        <taxon>Pseudomonadati</taxon>
        <taxon>Pseudomonadota</taxon>
        <taxon>Gammaproteobacteria</taxon>
        <taxon>Alteromonadales</taxon>
        <taxon>Pseudoalteromonadaceae</taxon>
        <taxon>Pseudoalteromonas</taxon>
    </lineage>
</organism>
<sequence>MAAKEVLFAGDARAKMLTGVNILANAVKVTLGPKGRNVVLDKSFGSPVITKDGVSVAKEIELEDKFENMGAQMVKEVASKANDAAGDGTTTATVLAQSIVNEGLKAVAAGMNPMDLKRGIDKAVIAAVAELKALSVPCSDTKAIAQVGTISANSDKEIGDIIAQAMEKVGRNSGVITVEEGQSLENELDVVEGMQFDRGYLSPYFINSPEKGTVELDNPFILLVDKKISNIRELLPTLEAVAKASKPLLIIAEDLEGEALATLVVNNMRGIVKVSAVKAPGFGDRRKAMLQDIAVLTGGTVISEEIGLELEKATVEDLGTAKRVIITKDDTTIIDGAGEEAGINGRVSQIKAQIEEATSDYDKEKLQERMAKLAGGVAVIKVGAATEMEMKEKKDRVEDALNATRAAVEEGVVPGGGVALVRAASKLVDLVGDNEDQNHGIKVALRAMEAPLRQIVTNAGDEASVVINAVKAGSGNFGYNAATGEYNDMIEMGILDPTKVTRSALQFAGSIAGLMITTEAMVAEIPKDDSAPDMGGMGGMGGMGGMM</sequence>
<dbReference type="EC" id="5.6.1.7" evidence="1"/>
<dbReference type="EMBL" id="AJ243594">
    <property type="protein sequence ID" value="CAB50775.1"/>
    <property type="molecule type" value="Genomic_DNA"/>
</dbReference>
<dbReference type="EMBL" id="CR954246">
    <property type="protein sequence ID" value="CAI85358.1"/>
    <property type="molecule type" value="Genomic_DNA"/>
</dbReference>
<dbReference type="SMR" id="Q9XAU7"/>
<dbReference type="STRING" id="326442.PSHAa0259"/>
<dbReference type="KEGG" id="pha:PSHAa0259"/>
<dbReference type="PATRIC" id="fig|326442.8.peg.246"/>
<dbReference type="eggNOG" id="COG0459">
    <property type="taxonomic scope" value="Bacteria"/>
</dbReference>
<dbReference type="HOGENOM" id="CLU_016503_3_0_6"/>
<dbReference type="BioCyc" id="PHAL326442:PSHA_RS01285-MONOMER"/>
<dbReference type="Proteomes" id="UP000006843">
    <property type="component" value="Chromosome I"/>
</dbReference>
<dbReference type="GO" id="GO:0005737">
    <property type="term" value="C:cytoplasm"/>
    <property type="evidence" value="ECO:0007669"/>
    <property type="project" value="UniProtKB-SubCell"/>
</dbReference>
<dbReference type="GO" id="GO:0005524">
    <property type="term" value="F:ATP binding"/>
    <property type="evidence" value="ECO:0007669"/>
    <property type="project" value="UniProtKB-UniRule"/>
</dbReference>
<dbReference type="GO" id="GO:0140662">
    <property type="term" value="F:ATP-dependent protein folding chaperone"/>
    <property type="evidence" value="ECO:0007669"/>
    <property type="project" value="InterPro"/>
</dbReference>
<dbReference type="GO" id="GO:0016853">
    <property type="term" value="F:isomerase activity"/>
    <property type="evidence" value="ECO:0007669"/>
    <property type="project" value="UniProtKB-KW"/>
</dbReference>
<dbReference type="GO" id="GO:0051082">
    <property type="term" value="F:unfolded protein binding"/>
    <property type="evidence" value="ECO:0007669"/>
    <property type="project" value="UniProtKB-UniRule"/>
</dbReference>
<dbReference type="GO" id="GO:0042026">
    <property type="term" value="P:protein refolding"/>
    <property type="evidence" value="ECO:0007669"/>
    <property type="project" value="UniProtKB-UniRule"/>
</dbReference>
<dbReference type="CDD" id="cd03344">
    <property type="entry name" value="GroEL"/>
    <property type="match status" value="1"/>
</dbReference>
<dbReference type="FunFam" id="1.10.560.10:FF:000001">
    <property type="entry name" value="60 kDa chaperonin"/>
    <property type="match status" value="1"/>
</dbReference>
<dbReference type="FunFam" id="3.50.7.10:FF:000001">
    <property type="entry name" value="60 kDa chaperonin"/>
    <property type="match status" value="1"/>
</dbReference>
<dbReference type="Gene3D" id="3.50.7.10">
    <property type="entry name" value="GroEL"/>
    <property type="match status" value="1"/>
</dbReference>
<dbReference type="Gene3D" id="1.10.560.10">
    <property type="entry name" value="GroEL-like equatorial domain"/>
    <property type="match status" value="1"/>
</dbReference>
<dbReference type="Gene3D" id="3.30.260.10">
    <property type="entry name" value="TCP-1-like chaperonin intermediate domain"/>
    <property type="match status" value="1"/>
</dbReference>
<dbReference type="HAMAP" id="MF_00600">
    <property type="entry name" value="CH60"/>
    <property type="match status" value="1"/>
</dbReference>
<dbReference type="InterPro" id="IPR018370">
    <property type="entry name" value="Chaperonin_Cpn60_CS"/>
</dbReference>
<dbReference type="InterPro" id="IPR001844">
    <property type="entry name" value="Cpn60/GroEL"/>
</dbReference>
<dbReference type="InterPro" id="IPR002423">
    <property type="entry name" value="Cpn60/GroEL/TCP-1"/>
</dbReference>
<dbReference type="InterPro" id="IPR027409">
    <property type="entry name" value="GroEL-like_apical_dom_sf"/>
</dbReference>
<dbReference type="InterPro" id="IPR027413">
    <property type="entry name" value="GROEL-like_equatorial_sf"/>
</dbReference>
<dbReference type="InterPro" id="IPR027410">
    <property type="entry name" value="TCP-1-like_intermed_sf"/>
</dbReference>
<dbReference type="NCBIfam" id="TIGR02348">
    <property type="entry name" value="GroEL"/>
    <property type="match status" value="1"/>
</dbReference>
<dbReference type="NCBIfam" id="NF000592">
    <property type="entry name" value="PRK00013.1"/>
    <property type="match status" value="1"/>
</dbReference>
<dbReference type="NCBIfam" id="NF009487">
    <property type="entry name" value="PRK12849.1"/>
    <property type="match status" value="1"/>
</dbReference>
<dbReference type="NCBIfam" id="NF009488">
    <property type="entry name" value="PRK12850.1"/>
    <property type="match status" value="1"/>
</dbReference>
<dbReference type="NCBIfam" id="NF009489">
    <property type="entry name" value="PRK12851.1"/>
    <property type="match status" value="1"/>
</dbReference>
<dbReference type="PANTHER" id="PTHR45633">
    <property type="entry name" value="60 KDA HEAT SHOCK PROTEIN, MITOCHONDRIAL"/>
    <property type="match status" value="1"/>
</dbReference>
<dbReference type="Pfam" id="PF00118">
    <property type="entry name" value="Cpn60_TCP1"/>
    <property type="match status" value="1"/>
</dbReference>
<dbReference type="PRINTS" id="PR00298">
    <property type="entry name" value="CHAPERONIN60"/>
</dbReference>
<dbReference type="SUPFAM" id="SSF52029">
    <property type="entry name" value="GroEL apical domain-like"/>
    <property type="match status" value="1"/>
</dbReference>
<dbReference type="SUPFAM" id="SSF48592">
    <property type="entry name" value="GroEL equatorial domain-like"/>
    <property type="match status" value="1"/>
</dbReference>
<dbReference type="SUPFAM" id="SSF54849">
    <property type="entry name" value="GroEL-intermediate domain like"/>
    <property type="match status" value="1"/>
</dbReference>
<dbReference type="PROSITE" id="PS00296">
    <property type="entry name" value="CHAPERONINS_CPN60"/>
    <property type="match status" value="1"/>
</dbReference>